<feature type="chain" id="PRO_1000002203" description="DNA-binding protein Pars_1791">
    <location>
        <begin position="1"/>
        <end position="110"/>
    </location>
</feature>
<proteinExistence type="inferred from homology"/>
<protein>
    <recommendedName>
        <fullName evidence="1">DNA-binding protein Pars_1791</fullName>
    </recommendedName>
</protein>
<gene>
    <name type="ordered locus">Pars_1791</name>
</gene>
<organism>
    <name type="scientific">Pyrobaculum arsenaticum (strain DSM 13514 / JCM 11321 / PZ6)</name>
    <dbReference type="NCBI Taxonomy" id="340102"/>
    <lineage>
        <taxon>Archaea</taxon>
        <taxon>Thermoproteota</taxon>
        <taxon>Thermoprotei</taxon>
        <taxon>Thermoproteales</taxon>
        <taxon>Thermoproteaceae</taxon>
        <taxon>Pyrobaculum</taxon>
    </lineage>
</organism>
<sequence length="110" mass="12795">MAEGEIEDRELEELRRKKLEELQKKAELERQAQIAAAQRRMALKRILTPEALARLDNIRIVRPELAEALEQQIIALASSGRVKVPIDDNTLKKILEAVYSQTRKEYKFRL</sequence>
<reference key="1">
    <citation type="submission" date="2007-04" db="EMBL/GenBank/DDBJ databases">
        <title>Complete sequence of Pyrobaculum arsenaticum DSM 13514.</title>
        <authorList>
            <consortium name="US DOE Joint Genome Institute"/>
            <person name="Copeland A."/>
            <person name="Lucas S."/>
            <person name="Lapidus A."/>
            <person name="Barry K."/>
            <person name="Glavina del Rio T."/>
            <person name="Dalin E."/>
            <person name="Tice H."/>
            <person name="Pitluck S."/>
            <person name="Chain P."/>
            <person name="Malfatti S."/>
            <person name="Shin M."/>
            <person name="Vergez L."/>
            <person name="Schmutz J."/>
            <person name="Larimer F."/>
            <person name="Land M."/>
            <person name="Hauser L."/>
            <person name="Kyrpides N."/>
            <person name="Mikhailova N."/>
            <person name="Cozen A.E."/>
            <person name="Fitz-Gibbon S.T."/>
            <person name="House C.H."/>
            <person name="Saltikov C."/>
            <person name="Lowe T.M."/>
            <person name="Richardson P."/>
        </authorList>
    </citation>
    <scope>NUCLEOTIDE SEQUENCE [LARGE SCALE GENOMIC DNA]</scope>
    <source>
        <strain>ATCC 700994 / DSM 13514 / JCM 11321 / PZ6</strain>
    </source>
</reference>
<name>Y1791_PYRAR</name>
<evidence type="ECO:0000255" key="1">
    <source>
        <dbReference type="HAMAP-Rule" id="MF_00026"/>
    </source>
</evidence>
<accession>A4WLS5</accession>
<keyword id="KW-0238">DNA-binding</keyword>
<comment type="similarity">
    <text evidence="1">Belongs to the PDCD5 family.</text>
</comment>
<dbReference type="EMBL" id="CP000660">
    <property type="protein sequence ID" value="ABP51342.1"/>
    <property type="molecule type" value="Genomic_DNA"/>
</dbReference>
<dbReference type="SMR" id="A4WLS5"/>
<dbReference type="STRING" id="340102.Pars_1791"/>
<dbReference type="KEGG" id="pas:Pars_1791"/>
<dbReference type="HOGENOM" id="CLU_122978_3_0_2"/>
<dbReference type="OrthoDB" id="7912at2157"/>
<dbReference type="PhylomeDB" id="A4WLS5"/>
<dbReference type="Proteomes" id="UP000001567">
    <property type="component" value="Chromosome"/>
</dbReference>
<dbReference type="GO" id="GO:0005829">
    <property type="term" value="C:cytosol"/>
    <property type="evidence" value="ECO:0007669"/>
    <property type="project" value="TreeGrafter"/>
</dbReference>
<dbReference type="GO" id="GO:0003677">
    <property type="term" value="F:DNA binding"/>
    <property type="evidence" value="ECO:0007669"/>
    <property type="project" value="UniProtKB-UniRule"/>
</dbReference>
<dbReference type="Gene3D" id="1.10.8.140">
    <property type="entry name" value="PDCD5-like"/>
    <property type="match status" value="1"/>
</dbReference>
<dbReference type="HAMAP" id="MF_00026">
    <property type="entry name" value="dsDNA_bind"/>
    <property type="match status" value="1"/>
</dbReference>
<dbReference type="InterPro" id="IPR022889">
    <property type="entry name" value="DNA_bind_arc"/>
</dbReference>
<dbReference type="InterPro" id="IPR002836">
    <property type="entry name" value="PDCD5-like"/>
</dbReference>
<dbReference type="InterPro" id="IPR036883">
    <property type="entry name" value="PDCD5-like_sf"/>
</dbReference>
<dbReference type="NCBIfam" id="NF003268">
    <property type="entry name" value="PRK04239.1"/>
    <property type="match status" value="1"/>
</dbReference>
<dbReference type="PANTHER" id="PTHR10840">
    <property type="entry name" value="PROGRAMMED CELL DEATH PROTEIN 5"/>
    <property type="match status" value="1"/>
</dbReference>
<dbReference type="PANTHER" id="PTHR10840:SF0">
    <property type="entry name" value="PROGRAMMED CELL DEATH PROTEIN 5"/>
    <property type="match status" value="1"/>
</dbReference>
<dbReference type="Pfam" id="PF01984">
    <property type="entry name" value="dsDNA_bind"/>
    <property type="match status" value="1"/>
</dbReference>
<dbReference type="PIRSF" id="PIRSF015730">
    <property type="entry name" value="TFAR19"/>
    <property type="match status" value="1"/>
</dbReference>
<dbReference type="SUPFAM" id="SSF46950">
    <property type="entry name" value="Double-stranded DNA-binding domain"/>
    <property type="match status" value="1"/>
</dbReference>